<proteinExistence type="inferred from homology"/>
<evidence type="ECO:0000255" key="1">
    <source>
        <dbReference type="HAMAP-Rule" id="MF_01844"/>
    </source>
</evidence>
<protein>
    <recommendedName>
        <fullName evidence="1">Na(+)/H(+) antiporter NhaA</fullName>
    </recommendedName>
    <alternativeName>
        <fullName evidence="1">Sodium/proton antiporter NhaA</fullName>
    </alternativeName>
</protein>
<name>NHAA_FRATO</name>
<accession>Q0BP56</accession>
<comment type="function">
    <text evidence="1">Na(+)/H(+) antiporter that extrudes sodium in exchange for external protons.</text>
</comment>
<comment type="catalytic activity">
    <reaction evidence="1">
        <text>Na(+)(in) + 2 H(+)(out) = Na(+)(out) + 2 H(+)(in)</text>
        <dbReference type="Rhea" id="RHEA:29251"/>
        <dbReference type="ChEBI" id="CHEBI:15378"/>
        <dbReference type="ChEBI" id="CHEBI:29101"/>
    </reaction>
    <physiologicalReaction direction="left-to-right" evidence="1">
        <dbReference type="Rhea" id="RHEA:29252"/>
    </physiologicalReaction>
</comment>
<comment type="subcellular location">
    <subcellularLocation>
        <location evidence="1">Cell inner membrane</location>
        <topology evidence="1">Multi-pass membrane protein</topology>
    </subcellularLocation>
</comment>
<comment type="similarity">
    <text evidence="1">Belongs to the NhaA Na(+)/H(+) (TC 2.A.33) antiporter family.</text>
</comment>
<keyword id="KW-0050">Antiport</keyword>
<keyword id="KW-0997">Cell inner membrane</keyword>
<keyword id="KW-1003">Cell membrane</keyword>
<keyword id="KW-0406">Ion transport</keyword>
<keyword id="KW-0472">Membrane</keyword>
<keyword id="KW-0915">Sodium</keyword>
<keyword id="KW-0739">Sodium transport</keyword>
<keyword id="KW-0812">Transmembrane</keyword>
<keyword id="KW-1133">Transmembrane helix</keyword>
<keyword id="KW-0813">Transport</keyword>
<organism>
    <name type="scientific">Francisella tularensis subsp. holarctica (strain OSU18)</name>
    <dbReference type="NCBI Taxonomy" id="393011"/>
    <lineage>
        <taxon>Bacteria</taxon>
        <taxon>Pseudomonadati</taxon>
        <taxon>Pseudomonadota</taxon>
        <taxon>Gammaproteobacteria</taxon>
        <taxon>Thiotrichales</taxon>
        <taxon>Francisellaceae</taxon>
        <taxon>Francisella</taxon>
    </lineage>
</organism>
<gene>
    <name evidence="1" type="primary">nhaA</name>
    <name type="ordered locus">FTH_0080</name>
</gene>
<dbReference type="EMBL" id="CP000437">
    <property type="protein sequence ID" value="ABI82128.1"/>
    <property type="molecule type" value="Genomic_DNA"/>
</dbReference>
<dbReference type="RefSeq" id="WP_003014054.1">
    <property type="nucleotide sequence ID" value="NC_017463.1"/>
</dbReference>
<dbReference type="SMR" id="Q0BP56"/>
<dbReference type="KEGG" id="fth:FTH_0080"/>
<dbReference type="GO" id="GO:0005886">
    <property type="term" value="C:plasma membrane"/>
    <property type="evidence" value="ECO:0007669"/>
    <property type="project" value="UniProtKB-SubCell"/>
</dbReference>
<dbReference type="GO" id="GO:0015385">
    <property type="term" value="F:sodium:proton antiporter activity"/>
    <property type="evidence" value="ECO:0007669"/>
    <property type="project" value="TreeGrafter"/>
</dbReference>
<dbReference type="GO" id="GO:0006885">
    <property type="term" value="P:regulation of pH"/>
    <property type="evidence" value="ECO:0007669"/>
    <property type="project" value="InterPro"/>
</dbReference>
<dbReference type="Gene3D" id="1.20.1530.10">
    <property type="entry name" value="Na+/H+ antiporter like domain"/>
    <property type="match status" value="1"/>
</dbReference>
<dbReference type="HAMAP" id="MF_01844">
    <property type="entry name" value="NhaA"/>
    <property type="match status" value="1"/>
</dbReference>
<dbReference type="InterPro" id="IPR023171">
    <property type="entry name" value="Na/H_antiporter_dom_sf"/>
</dbReference>
<dbReference type="InterPro" id="IPR004670">
    <property type="entry name" value="NhaA"/>
</dbReference>
<dbReference type="NCBIfam" id="TIGR00773">
    <property type="entry name" value="NhaA"/>
    <property type="match status" value="1"/>
</dbReference>
<dbReference type="NCBIfam" id="NF007111">
    <property type="entry name" value="PRK09560.1"/>
    <property type="match status" value="1"/>
</dbReference>
<dbReference type="NCBIfam" id="NF007112">
    <property type="entry name" value="PRK09561.1"/>
    <property type="match status" value="1"/>
</dbReference>
<dbReference type="NCBIfam" id="NF011427">
    <property type="entry name" value="PRK14854.1"/>
    <property type="match status" value="1"/>
</dbReference>
<dbReference type="PANTHER" id="PTHR30341:SF0">
    <property type="entry name" value="NA(+)_H(+) ANTIPORTER NHAA"/>
    <property type="match status" value="1"/>
</dbReference>
<dbReference type="PANTHER" id="PTHR30341">
    <property type="entry name" value="SODIUM ION/PROTON ANTIPORTER NHAA-RELATED"/>
    <property type="match status" value="1"/>
</dbReference>
<dbReference type="Pfam" id="PF06965">
    <property type="entry name" value="Na_H_antiport_1"/>
    <property type="match status" value="1"/>
</dbReference>
<reference key="1">
    <citation type="journal article" date="2006" name="J. Bacteriol.">
        <title>Chromosome rearrangement and diversification of Francisella tularensis revealed by the type B (OSU18) genome sequence.</title>
        <authorList>
            <person name="Petrosino J.F."/>
            <person name="Xiang Q."/>
            <person name="Karpathy S.E."/>
            <person name="Jiang H."/>
            <person name="Yerrapragada S."/>
            <person name="Liu Y."/>
            <person name="Gioia J."/>
            <person name="Hemphill L."/>
            <person name="Gonzalez A."/>
            <person name="Raghavan T.M."/>
            <person name="Uzman A."/>
            <person name="Fox G.E."/>
            <person name="Highlander S."/>
            <person name="Reichard M."/>
            <person name="Morton R.J."/>
            <person name="Clinkenbeard K.D."/>
            <person name="Weinstock G.M."/>
        </authorList>
    </citation>
    <scope>NUCLEOTIDE SEQUENCE [LARGE SCALE GENOMIC DNA]</scope>
    <source>
        <strain>OSU18</strain>
    </source>
</reference>
<sequence>MGASQKNQELIGGLILFSAALLAIVVNNSPLASYYAMLETINVKLGIENLVIDKNLMHWINDGLMAIYFLYIGLEIKREIIVGTLSKLSNIITPAIAAFAGLAMPSLIYLSINHDIKVINGWAIPSATDIAFTLGILALLGTRVPAKLKLLVITIAIFDDIAAIAIIAIFYTKSLSLLSLSLGTLFILAMIICNRIFKINRSSVYVVLGFFAWFCTIKSGVHATLAGFTTALCIPFRENDKDSPANFMEDSLHPWIIYFILPVFAFANAGISFSGISFSILFEPITLGIIWGLFVGKQLGIFSILAVFKKLKWFKLGESFSNLQLYGISLLCGIGFTMSLFIGVLAFNDTHLLNAIKIGVVVGSVLSGFFGYIVLRFIVTNPS</sequence>
<feature type="chain" id="PRO_0000334296" description="Na(+)/H(+) antiporter NhaA">
    <location>
        <begin position="1"/>
        <end position="383"/>
    </location>
</feature>
<feature type="transmembrane region" description="Helical" evidence="1">
    <location>
        <begin position="10"/>
        <end position="30"/>
    </location>
</feature>
<feature type="transmembrane region" description="Helical" evidence="1">
    <location>
        <begin position="56"/>
        <end position="76"/>
    </location>
</feature>
<feature type="transmembrane region" description="Helical" evidence="1">
    <location>
        <begin position="91"/>
        <end position="111"/>
    </location>
</feature>
<feature type="transmembrane region" description="Helical" evidence="1">
    <location>
        <begin position="121"/>
        <end position="141"/>
    </location>
</feature>
<feature type="transmembrane region" description="Helical" evidence="1">
    <location>
        <begin position="150"/>
        <end position="170"/>
    </location>
</feature>
<feature type="transmembrane region" description="Helical" evidence="1">
    <location>
        <begin position="174"/>
        <end position="194"/>
    </location>
</feature>
<feature type="transmembrane region" description="Helical" evidence="1">
    <location>
        <begin position="206"/>
        <end position="226"/>
    </location>
</feature>
<feature type="transmembrane region" description="Helical" evidence="1">
    <location>
        <begin position="254"/>
        <end position="274"/>
    </location>
</feature>
<feature type="transmembrane region" description="Helical" evidence="1">
    <location>
        <begin position="289"/>
        <end position="308"/>
    </location>
</feature>
<feature type="transmembrane region" description="Helical" evidence="1">
    <location>
        <begin position="327"/>
        <end position="347"/>
    </location>
</feature>
<feature type="transmembrane region" description="Helical" evidence="1">
    <location>
        <begin position="355"/>
        <end position="375"/>
    </location>
</feature>